<reference key="1">
    <citation type="submission" date="2008-10" db="EMBL/GenBank/DDBJ databases">
        <title>Genome sequence of Clostridium botulinum A2 Kyoto.</title>
        <authorList>
            <person name="Shrivastava S."/>
            <person name="Brinkac L.M."/>
            <person name="Brown J.L."/>
            <person name="Bruce D."/>
            <person name="Detter C.C."/>
            <person name="Johnson E.A."/>
            <person name="Munk C.A."/>
            <person name="Smith L.A."/>
            <person name="Smith T.J."/>
            <person name="Sutton G."/>
            <person name="Brettin T.S."/>
        </authorList>
    </citation>
    <scope>NUCLEOTIDE SEQUENCE [LARGE SCALE GENOMIC DNA]</scope>
    <source>
        <strain>Kyoto / Type A2</strain>
    </source>
</reference>
<organism>
    <name type="scientific">Clostridium botulinum (strain Kyoto / Type A2)</name>
    <dbReference type="NCBI Taxonomy" id="536232"/>
    <lineage>
        <taxon>Bacteria</taxon>
        <taxon>Bacillati</taxon>
        <taxon>Bacillota</taxon>
        <taxon>Clostridia</taxon>
        <taxon>Eubacteriales</taxon>
        <taxon>Clostridiaceae</taxon>
        <taxon>Clostridium</taxon>
    </lineage>
</organism>
<accession>C1FKE9</accession>
<dbReference type="EC" id="3.1.1.96" evidence="1"/>
<dbReference type="EMBL" id="CP001581">
    <property type="protein sequence ID" value="ACO87214.1"/>
    <property type="molecule type" value="Genomic_DNA"/>
</dbReference>
<dbReference type="RefSeq" id="WP_003357859.1">
    <property type="nucleotide sequence ID" value="NC_012563.1"/>
</dbReference>
<dbReference type="SMR" id="C1FKE9"/>
<dbReference type="KEGG" id="cby:CLM_3463"/>
<dbReference type="eggNOG" id="COG1490">
    <property type="taxonomic scope" value="Bacteria"/>
</dbReference>
<dbReference type="HOGENOM" id="CLU_076901_1_0_9"/>
<dbReference type="Proteomes" id="UP000001374">
    <property type="component" value="Chromosome"/>
</dbReference>
<dbReference type="GO" id="GO:0005737">
    <property type="term" value="C:cytoplasm"/>
    <property type="evidence" value="ECO:0007669"/>
    <property type="project" value="UniProtKB-SubCell"/>
</dbReference>
<dbReference type="GO" id="GO:0051500">
    <property type="term" value="F:D-tyrosyl-tRNA(Tyr) deacylase activity"/>
    <property type="evidence" value="ECO:0007669"/>
    <property type="project" value="TreeGrafter"/>
</dbReference>
<dbReference type="GO" id="GO:0106026">
    <property type="term" value="F:Gly-tRNA(Ala) deacylase activity"/>
    <property type="evidence" value="ECO:0007669"/>
    <property type="project" value="UniProtKB-UniRule"/>
</dbReference>
<dbReference type="GO" id="GO:0043908">
    <property type="term" value="F:Ser(Gly)-tRNA(Ala) hydrolase activity"/>
    <property type="evidence" value="ECO:0007669"/>
    <property type="project" value="UniProtKB-UniRule"/>
</dbReference>
<dbReference type="GO" id="GO:0000049">
    <property type="term" value="F:tRNA binding"/>
    <property type="evidence" value="ECO:0007669"/>
    <property type="project" value="UniProtKB-UniRule"/>
</dbReference>
<dbReference type="GO" id="GO:0019478">
    <property type="term" value="P:D-amino acid catabolic process"/>
    <property type="evidence" value="ECO:0007669"/>
    <property type="project" value="UniProtKB-UniRule"/>
</dbReference>
<dbReference type="CDD" id="cd00563">
    <property type="entry name" value="Dtyr_deacylase"/>
    <property type="match status" value="1"/>
</dbReference>
<dbReference type="FunFam" id="3.50.80.10:FF:000001">
    <property type="entry name" value="D-aminoacyl-tRNA deacylase"/>
    <property type="match status" value="1"/>
</dbReference>
<dbReference type="Gene3D" id="3.50.80.10">
    <property type="entry name" value="D-tyrosyl-tRNA(Tyr) deacylase"/>
    <property type="match status" value="1"/>
</dbReference>
<dbReference type="HAMAP" id="MF_00518">
    <property type="entry name" value="Deacylase_Dtd"/>
    <property type="match status" value="1"/>
</dbReference>
<dbReference type="InterPro" id="IPR003732">
    <property type="entry name" value="Daa-tRNA_deacyls_DTD"/>
</dbReference>
<dbReference type="InterPro" id="IPR023509">
    <property type="entry name" value="DTD-like_sf"/>
</dbReference>
<dbReference type="NCBIfam" id="TIGR00256">
    <property type="entry name" value="D-aminoacyl-tRNA deacylase"/>
    <property type="match status" value="1"/>
</dbReference>
<dbReference type="PANTHER" id="PTHR10472:SF5">
    <property type="entry name" value="D-AMINOACYL-TRNA DEACYLASE 1"/>
    <property type="match status" value="1"/>
</dbReference>
<dbReference type="PANTHER" id="PTHR10472">
    <property type="entry name" value="D-TYROSYL-TRNA TYR DEACYLASE"/>
    <property type="match status" value="1"/>
</dbReference>
<dbReference type="Pfam" id="PF02580">
    <property type="entry name" value="Tyr_Deacylase"/>
    <property type="match status" value="1"/>
</dbReference>
<dbReference type="SUPFAM" id="SSF69500">
    <property type="entry name" value="DTD-like"/>
    <property type="match status" value="1"/>
</dbReference>
<sequence>MRAVVQRVISSKVEVDGKVIGSIGKGLNVLLGISKEDTEEDIKYLKEKIINLRIFEDENEKLNKSLLDIGGDIIIVSQFTLYGDCRKGRRPSFIEALGGEEAYILYNKFVESIKKEVNNVATGEFGADMKVYIENDGPVTILLDSKKTF</sequence>
<name>DTD_CLOBJ</name>
<protein>
    <recommendedName>
        <fullName evidence="1">D-aminoacyl-tRNA deacylase</fullName>
        <shortName evidence="1">DTD</shortName>
        <ecNumber evidence="1">3.1.1.96</ecNumber>
    </recommendedName>
    <alternativeName>
        <fullName evidence="1">Gly-tRNA(Ala) deacylase</fullName>
    </alternativeName>
</protein>
<proteinExistence type="inferred from homology"/>
<evidence type="ECO:0000255" key="1">
    <source>
        <dbReference type="HAMAP-Rule" id="MF_00518"/>
    </source>
</evidence>
<gene>
    <name evidence="1" type="primary">dtd</name>
    <name type="ordered locus">CLM_3463</name>
</gene>
<feature type="chain" id="PRO_1000146189" description="D-aminoacyl-tRNA deacylase">
    <location>
        <begin position="1"/>
        <end position="149"/>
    </location>
</feature>
<feature type="short sequence motif" description="Gly-cisPro motif, important for rejection of L-amino acids" evidence="1">
    <location>
        <begin position="137"/>
        <end position="138"/>
    </location>
</feature>
<comment type="function">
    <text evidence="1">An aminoacyl-tRNA editing enzyme that deacylates mischarged D-aminoacyl-tRNAs. Also deacylates mischarged glycyl-tRNA(Ala), protecting cells against glycine mischarging by AlaRS. Acts via tRNA-based rather than protein-based catalysis; rejects L-amino acids rather than detecting D-amino acids in the active site. By recycling D-aminoacyl-tRNA to D-amino acids and free tRNA molecules, this enzyme counteracts the toxicity associated with the formation of D-aminoacyl-tRNA entities in vivo and helps enforce protein L-homochirality.</text>
</comment>
<comment type="catalytic activity">
    <reaction evidence="1">
        <text>glycyl-tRNA(Ala) + H2O = tRNA(Ala) + glycine + H(+)</text>
        <dbReference type="Rhea" id="RHEA:53744"/>
        <dbReference type="Rhea" id="RHEA-COMP:9657"/>
        <dbReference type="Rhea" id="RHEA-COMP:13640"/>
        <dbReference type="ChEBI" id="CHEBI:15377"/>
        <dbReference type="ChEBI" id="CHEBI:15378"/>
        <dbReference type="ChEBI" id="CHEBI:57305"/>
        <dbReference type="ChEBI" id="CHEBI:78442"/>
        <dbReference type="ChEBI" id="CHEBI:78522"/>
        <dbReference type="EC" id="3.1.1.96"/>
    </reaction>
</comment>
<comment type="catalytic activity">
    <reaction evidence="1">
        <text>a D-aminoacyl-tRNA + H2O = a tRNA + a D-alpha-amino acid + H(+)</text>
        <dbReference type="Rhea" id="RHEA:13953"/>
        <dbReference type="Rhea" id="RHEA-COMP:10123"/>
        <dbReference type="Rhea" id="RHEA-COMP:10124"/>
        <dbReference type="ChEBI" id="CHEBI:15377"/>
        <dbReference type="ChEBI" id="CHEBI:15378"/>
        <dbReference type="ChEBI" id="CHEBI:59871"/>
        <dbReference type="ChEBI" id="CHEBI:78442"/>
        <dbReference type="ChEBI" id="CHEBI:79333"/>
        <dbReference type="EC" id="3.1.1.96"/>
    </reaction>
</comment>
<comment type="subunit">
    <text evidence="1">Homodimer.</text>
</comment>
<comment type="subcellular location">
    <subcellularLocation>
        <location evidence="1">Cytoplasm</location>
    </subcellularLocation>
</comment>
<comment type="domain">
    <text evidence="1">A Gly-cisPro motif from one monomer fits into the active site of the other monomer to allow specific chiral rejection of L-amino acids.</text>
</comment>
<comment type="similarity">
    <text evidence="1">Belongs to the DTD family.</text>
</comment>
<keyword id="KW-0963">Cytoplasm</keyword>
<keyword id="KW-0378">Hydrolase</keyword>
<keyword id="KW-0694">RNA-binding</keyword>
<keyword id="KW-0820">tRNA-binding</keyword>